<feature type="chain" id="PRO_0000182479" description="Heat-inducible transcription repressor HrcA">
    <location>
        <begin position="1"/>
        <end position="351"/>
    </location>
</feature>
<comment type="function">
    <text evidence="1">Negative regulator of class I heat shock genes (grpE-dnaK-dnaJ and groELS operons). Prevents heat-shock induction of these operons.</text>
</comment>
<comment type="similarity">
    <text evidence="1">Belongs to the HrcA family.</text>
</comment>
<gene>
    <name evidence="1" type="primary">hrcA</name>
    <name type="ordered locus">FN0113</name>
</gene>
<keyword id="KW-1185">Reference proteome</keyword>
<keyword id="KW-0678">Repressor</keyword>
<keyword id="KW-0346">Stress response</keyword>
<keyword id="KW-0804">Transcription</keyword>
<keyword id="KW-0805">Transcription regulation</keyword>
<sequence>MSANKKVRGEIMGISEREKLVLNAIVDYYLTVGDTIGSRTLVKKYGIELSSATIRNVMADLEDMGFIEKTHTSSGRIPTDMGYKYYLTELLKVEKITQEEIENISNVYNRRVDELENILKKTSTLLSKLTNYAGIAVEPKPDNKKVSRVELVYIDEYLVMAIIVMDDRRVKTKNIHLAYPISKEEVEKKVDELNAKIRNNEIAINDIEKFFTESTDIVYEYDDEDELSKYFINNLPSMLKNENIAEVTDVIEFFNERKDIRELFEKLIEQKAQENSKSNVNVILGDELGIKELEDFSFVYSIYDIGGAQGIIGVMGPKRMAYSKTMGLINHVSREVNKLINSMEKDKNKKV</sequence>
<proteinExistence type="inferred from homology"/>
<accession>Q8RH08</accession>
<dbReference type="EMBL" id="AE009951">
    <property type="protein sequence ID" value="AAL94322.1"/>
    <property type="molecule type" value="Genomic_DNA"/>
</dbReference>
<dbReference type="RefSeq" id="NP_603023.1">
    <property type="nucleotide sequence ID" value="NC_003454.1"/>
</dbReference>
<dbReference type="SMR" id="Q8RH08"/>
<dbReference type="FunCoup" id="Q8RH08">
    <property type="interactions" value="168"/>
</dbReference>
<dbReference type="STRING" id="190304.FN0113"/>
<dbReference type="PaxDb" id="190304-FN0113"/>
<dbReference type="EnsemblBacteria" id="AAL94322">
    <property type="protein sequence ID" value="AAL94322"/>
    <property type="gene ID" value="FN0113"/>
</dbReference>
<dbReference type="KEGG" id="fnu:FN0113"/>
<dbReference type="PATRIC" id="fig|190304.8.peg.700"/>
<dbReference type="eggNOG" id="COG1420">
    <property type="taxonomic scope" value="Bacteria"/>
</dbReference>
<dbReference type="HOGENOM" id="CLU_050019_1_0_0"/>
<dbReference type="InParanoid" id="Q8RH08"/>
<dbReference type="BioCyc" id="FNUC190304:G1FZS-724-MONOMER"/>
<dbReference type="Proteomes" id="UP000002521">
    <property type="component" value="Chromosome"/>
</dbReference>
<dbReference type="GO" id="GO:0003677">
    <property type="term" value="F:DNA binding"/>
    <property type="evidence" value="ECO:0007669"/>
    <property type="project" value="InterPro"/>
</dbReference>
<dbReference type="GO" id="GO:0045892">
    <property type="term" value="P:negative regulation of DNA-templated transcription"/>
    <property type="evidence" value="ECO:0000318"/>
    <property type="project" value="GO_Central"/>
</dbReference>
<dbReference type="FunFam" id="1.10.10.10:FF:000450">
    <property type="entry name" value="Heat-inducible transcription repressor HrcA"/>
    <property type="match status" value="1"/>
</dbReference>
<dbReference type="Gene3D" id="3.30.450.40">
    <property type="match status" value="1"/>
</dbReference>
<dbReference type="Gene3D" id="3.30.390.60">
    <property type="entry name" value="Heat-inducible transcription repressor hrca homolog, domain 3"/>
    <property type="match status" value="1"/>
</dbReference>
<dbReference type="Gene3D" id="1.10.10.10">
    <property type="entry name" value="Winged helix-like DNA-binding domain superfamily/Winged helix DNA-binding domain"/>
    <property type="match status" value="1"/>
</dbReference>
<dbReference type="HAMAP" id="MF_00081">
    <property type="entry name" value="HrcA"/>
    <property type="match status" value="1"/>
</dbReference>
<dbReference type="InterPro" id="IPR029016">
    <property type="entry name" value="GAF-like_dom_sf"/>
</dbReference>
<dbReference type="InterPro" id="IPR002571">
    <property type="entry name" value="HrcA"/>
</dbReference>
<dbReference type="InterPro" id="IPR021153">
    <property type="entry name" value="HrcA_C"/>
</dbReference>
<dbReference type="InterPro" id="IPR036388">
    <property type="entry name" value="WH-like_DNA-bd_sf"/>
</dbReference>
<dbReference type="InterPro" id="IPR036390">
    <property type="entry name" value="WH_DNA-bd_sf"/>
</dbReference>
<dbReference type="InterPro" id="IPR023120">
    <property type="entry name" value="WHTH_transcript_rep_HrcA_IDD"/>
</dbReference>
<dbReference type="NCBIfam" id="TIGR00331">
    <property type="entry name" value="hrcA"/>
    <property type="match status" value="1"/>
</dbReference>
<dbReference type="PANTHER" id="PTHR34824">
    <property type="entry name" value="HEAT-INDUCIBLE TRANSCRIPTION REPRESSOR HRCA"/>
    <property type="match status" value="1"/>
</dbReference>
<dbReference type="PANTHER" id="PTHR34824:SF1">
    <property type="entry name" value="HEAT-INDUCIBLE TRANSCRIPTION REPRESSOR HRCA"/>
    <property type="match status" value="1"/>
</dbReference>
<dbReference type="Pfam" id="PF01628">
    <property type="entry name" value="HrcA"/>
    <property type="match status" value="1"/>
</dbReference>
<dbReference type="PIRSF" id="PIRSF005485">
    <property type="entry name" value="HrcA"/>
    <property type="match status" value="1"/>
</dbReference>
<dbReference type="SUPFAM" id="SSF55781">
    <property type="entry name" value="GAF domain-like"/>
    <property type="match status" value="1"/>
</dbReference>
<dbReference type="SUPFAM" id="SSF46785">
    <property type="entry name" value="Winged helix' DNA-binding domain"/>
    <property type="match status" value="1"/>
</dbReference>
<name>HRCA_FUSNN</name>
<protein>
    <recommendedName>
        <fullName evidence="1">Heat-inducible transcription repressor HrcA</fullName>
    </recommendedName>
</protein>
<evidence type="ECO:0000255" key="1">
    <source>
        <dbReference type="HAMAP-Rule" id="MF_00081"/>
    </source>
</evidence>
<organism>
    <name type="scientific">Fusobacterium nucleatum subsp. nucleatum (strain ATCC 25586 / DSM 15643 / BCRC 10681 / CIP 101130 / JCM 8532 / KCTC 2640 / LMG 13131 / VPI 4355)</name>
    <dbReference type="NCBI Taxonomy" id="190304"/>
    <lineage>
        <taxon>Bacteria</taxon>
        <taxon>Fusobacteriati</taxon>
        <taxon>Fusobacteriota</taxon>
        <taxon>Fusobacteriia</taxon>
        <taxon>Fusobacteriales</taxon>
        <taxon>Fusobacteriaceae</taxon>
        <taxon>Fusobacterium</taxon>
    </lineage>
</organism>
<reference key="1">
    <citation type="journal article" date="2002" name="J. Bacteriol.">
        <title>Genome sequence and analysis of the oral bacterium Fusobacterium nucleatum strain ATCC 25586.</title>
        <authorList>
            <person name="Kapatral V."/>
            <person name="Anderson I."/>
            <person name="Ivanova N."/>
            <person name="Reznik G."/>
            <person name="Los T."/>
            <person name="Lykidis A."/>
            <person name="Bhattacharyya A."/>
            <person name="Bartman A."/>
            <person name="Gardner W."/>
            <person name="Grechkin G."/>
            <person name="Zhu L."/>
            <person name="Vasieva O."/>
            <person name="Chu L."/>
            <person name="Kogan Y."/>
            <person name="Chaga O."/>
            <person name="Goltsman E."/>
            <person name="Bernal A."/>
            <person name="Larsen N."/>
            <person name="D'Souza M."/>
            <person name="Walunas T."/>
            <person name="Pusch G."/>
            <person name="Haselkorn R."/>
            <person name="Fonstein M."/>
            <person name="Kyrpides N.C."/>
            <person name="Overbeek R."/>
        </authorList>
    </citation>
    <scope>NUCLEOTIDE SEQUENCE [LARGE SCALE GENOMIC DNA]</scope>
    <source>
        <strain>ATCC 25586 / DSM 15643 / BCRC 10681 / CIP 101130 / JCM 8532 / KCTC 2640 / LMG 13131 / VPI 4355</strain>
    </source>
</reference>